<proteinExistence type="inferred from homology"/>
<reference key="1">
    <citation type="journal article" date="2005" name="Proc. Natl. Acad. Sci. U.S.A.">
        <title>The genome of Salinibacter ruber: convergence and gene exchange among hyperhalophilic bacteria and archaea.</title>
        <authorList>
            <person name="Mongodin E.F."/>
            <person name="Nelson K.E."/>
            <person name="Daugherty S."/>
            <person name="DeBoy R.T."/>
            <person name="Wister J."/>
            <person name="Khouri H."/>
            <person name="Weidman J."/>
            <person name="Walsh D.A."/>
            <person name="Papke R.T."/>
            <person name="Sanchez Perez G."/>
            <person name="Sharma A.K."/>
            <person name="Nesbo C.L."/>
            <person name="MacLeod D."/>
            <person name="Bapteste E."/>
            <person name="Doolittle W.F."/>
            <person name="Charlebois R.L."/>
            <person name="Legault B."/>
            <person name="Rodriguez-Valera F."/>
        </authorList>
    </citation>
    <scope>NUCLEOTIDE SEQUENCE [LARGE SCALE GENOMIC DNA]</scope>
    <source>
        <strain>DSM 13855 / CECT 5946 / M31</strain>
    </source>
</reference>
<gene>
    <name evidence="1" type="primary">pdxH</name>
    <name type="ordered locus">SRU_0544</name>
</gene>
<organism>
    <name type="scientific">Salinibacter ruber (strain DSM 13855 / M31)</name>
    <dbReference type="NCBI Taxonomy" id="309807"/>
    <lineage>
        <taxon>Bacteria</taxon>
        <taxon>Pseudomonadati</taxon>
        <taxon>Rhodothermota</taxon>
        <taxon>Rhodothermia</taxon>
        <taxon>Rhodothermales</taxon>
        <taxon>Salinibacteraceae</taxon>
        <taxon>Salinibacter</taxon>
    </lineage>
</organism>
<feature type="chain" id="PRO_0000255890" description="Pyridoxine/pyridoxamine 5'-phosphate oxidase">
    <location>
        <begin position="1"/>
        <end position="215"/>
    </location>
</feature>
<feature type="binding site" evidence="1">
    <location>
        <begin position="8"/>
        <end position="11"/>
    </location>
    <ligand>
        <name>substrate</name>
    </ligand>
</feature>
<feature type="binding site" evidence="1">
    <location>
        <begin position="61"/>
        <end position="66"/>
    </location>
    <ligand>
        <name>FMN</name>
        <dbReference type="ChEBI" id="CHEBI:58210"/>
    </ligand>
</feature>
<feature type="binding site" evidence="1">
    <location>
        <position position="66"/>
    </location>
    <ligand>
        <name>substrate</name>
    </ligand>
</feature>
<feature type="binding site" evidence="1">
    <location>
        <begin position="76"/>
        <end position="77"/>
    </location>
    <ligand>
        <name>FMN</name>
        <dbReference type="ChEBI" id="CHEBI:58210"/>
    </ligand>
</feature>
<feature type="binding site" evidence="1">
    <location>
        <position position="82"/>
    </location>
    <ligand>
        <name>FMN</name>
        <dbReference type="ChEBI" id="CHEBI:58210"/>
    </ligand>
</feature>
<feature type="binding site" evidence="1">
    <location>
        <position position="83"/>
    </location>
    <ligand>
        <name>FMN</name>
        <dbReference type="ChEBI" id="CHEBI:58210"/>
    </ligand>
</feature>
<feature type="binding site" evidence="1">
    <location>
        <position position="105"/>
    </location>
    <ligand>
        <name>FMN</name>
        <dbReference type="ChEBI" id="CHEBI:58210"/>
    </ligand>
</feature>
<feature type="binding site" evidence="1">
    <location>
        <position position="123"/>
    </location>
    <ligand>
        <name>substrate</name>
    </ligand>
</feature>
<feature type="binding site" evidence="1">
    <location>
        <position position="127"/>
    </location>
    <ligand>
        <name>substrate</name>
    </ligand>
</feature>
<feature type="binding site" evidence="1">
    <location>
        <begin position="140"/>
        <end position="141"/>
    </location>
    <ligand>
        <name>FMN</name>
        <dbReference type="ChEBI" id="CHEBI:58210"/>
    </ligand>
</feature>
<feature type="binding site" evidence="1">
    <location>
        <position position="186"/>
    </location>
    <ligand>
        <name>FMN</name>
        <dbReference type="ChEBI" id="CHEBI:58210"/>
    </ligand>
</feature>
<feature type="binding site" evidence="1">
    <location>
        <begin position="192"/>
        <end position="194"/>
    </location>
    <ligand>
        <name>substrate</name>
    </ligand>
</feature>
<feature type="binding site" evidence="1">
    <location>
        <position position="196"/>
    </location>
    <ligand>
        <name>FMN</name>
        <dbReference type="ChEBI" id="CHEBI:58210"/>
    </ligand>
</feature>
<name>PDXH_SALRD</name>
<evidence type="ECO:0000255" key="1">
    <source>
        <dbReference type="HAMAP-Rule" id="MF_01629"/>
    </source>
</evidence>
<protein>
    <recommendedName>
        <fullName evidence="1">Pyridoxine/pyridoxamine 5'-phosphate oxidase</fullName>
        <ecNumber evidence="1">1.4.3.5</ecNumber>
    </recommendedName>
    <alternativeName>
        <fullName evidence="1">PNP/PMP oxidase</fullName>
        <shortName evidence="1">PNPOx</shortName>
    </alternativeName>
    <alternativeName>
        <fullName evidence="1">Pyridoxal 5'-phosphate synthase</fullName>
    </alternativeName>
</protein>
<sequence>MSKLADLRQEYARAELSRDHVTDDPIEQFRAWFDEAEDAELEEPNAMTLATAATDGTPSARIVLLKGLDDRGFHFYTNYESRKGTDLSQNPHAALVFLWKPLERQVRIEGTVERLPAEESTEYFHRRPRGAQMGAWASPQSRVVDSRADLEENLDTVKAEYGDEDEIPRPSHWGGYVVRPTEVEFWQGRPNRLHDRLRYRRSDPAGDWTLERLAP</sequence>
<comment type="function">
    <text evidence="1">Catalyzes the oxidation of either pyridoxine 5'-phosphate (PNP) or pyridoxamine 5'-phosphate (PMP) into pyridoxal 5'-phosphate (PLP).</text>
</comment>
<comment type="catalytic activity">
    <reaction evidence="1">
        <text>pyridoxamine 5'-phosphate + O2 + H2O = pyridoxal 5'-phosphate + H2O2 + NH4(+)</text>
        <dbReference type="Rhea" id="RHEA:15817"/>
        <dbReference type="ChEBI" id="CHEBI:15377"/>
        <dbReference type="ChEBI" id="CHEBI:15379"/>
        <dbReference type="ChEBI" id="CHEBI:16240"/>
        <dbReference type="ChEBI" id="CHEBI:28938"/>
        <dbReference type="ChEBI" id="CHEBI:58451"/>
        <dbReference type="ChEBI" id="CHEBI:597326"/>
        <dbReference type="EC" id="1.4.3.5"/>
    </reaction>
</comment>
<comment type="catalytic activity">
    <reaction evidence="1">
        <text>pyridoxine 5'-phosphate + O2 = pyridoxal 5'-phosphate + H2O2</text>
        <dbReference type="Rhea" id="RHEA:15149"/>
        <dbReference type="ChEBI" id="CHEBI:15379"/>
        <dbReference type="ChEBI" id="CHEBI:16240"/>
        <dbReference type="ChEBI" id="CHEBI:58589"/>
        <dbReference type="ChEBI" id="CHEBI:597326"/>
        <dbReference type="EC" id="1.4.3.5"/>
    </reaction>
</comment>
<comment type="cofactor">
    <cofactor evidence="1">
        <name>FMN</name>
        <dbReference type="ChEBI" id="CHEBI:58210"/>
    </cofactor>
    <text evidence="1">Binds 1 FMN per subunit.</text>
</comment>
<comment type="pathway">
    <text evidence="1">Cofactor metabolism; pyridoxal 5'-phosphate salvage; pyridoxal 5'-phosphate from pyridoxamine 5'-phosphate: step 1/1.</text>
</comment>
<comment type="pathway">
    <text evidence="1">Cofactor metabolism; pyridoxal 5'-phosphate salvage; pyridoxal 5'-phosphate from pyridoxine 5'-phosphate: step 1/1.</text>
</comment>
<comment type="subunit">
    <text evidence="1">Homodimer.</text>
</comment>
<comment type="similarity">
    <text evidence="1">Belongs to the pyridoxamine 5'-phosphate oxidase family.</text>
</comment>
<dbReference type="EC" id="1.4.3.5" evidence="1"/>
<dbReference type="EMBL" id="CP000159">
    <property type="protein sequence ID" value="ABC44789.1"/>
    <property type="molecule type" value="Genomic_DNA"/>
</dbReference>
<dbReference type="RefSeq" id="WP_011403320.1">
    <property type="nucleotide sequence ID" value="NC_007677.1"/>
</dbReference>
<dbReference type="RefSeq" id="YP_444687.1">
    <property type="nucleotide sequence ID" value="NC_007677.1"/>
</dbReference>
<dbReference type="SMR" id="Q2S544"/>
<dbReference type="STRING" id="309807.SRU_0544"/>
<dbReference type="EnsemblBacteria" id="ABC44789">
    <property type="protein sequence ID" value="ABC44789"/>
    <property type="gene ID" value="SRU_0544"/>
</dbReference>
<dbReference type="GeneID" id="83727462"/>
<dbReference type="KEGG" id="sru:SRU_0544"/>
<dbReference type="PATRIC" id="fig|309807.25.peg.566"/>
<dbReference type="eggNOG" id="COG0259">
    <property type="taxonomic scope" value="Bacteria"/>
</dbReference>
<dbReference type="HOGENOM" id="CLU_032263_2_2_10"/>
<dbReference type="OrthoDB" id="9780392at2"/>
<dbReference type="UniPathway" id="UPA01068">
    <property type="reaction ID" value="UER00304"/>
</dbReference>
<dbReference type="UniPathway" id="UPA01068">
    <property type="reaction ID" value="UER00305"/>
</dbReference>
<dbReference type="Proteomes" id="UP000008674">
    <property type="component" value="Chromosome"/>
</dbReference>
<dbReference type="GO" id="GO:0010181">
    <property type="term" value="F:FMN binding"/>
    <property type="evidence" value="ECO:0007669"/>
    <property type="project" value="InterPro"/>
</dbReference>
<dbReference type="GO" id="GO:0004733">
    <property type="term" value="F:pyridoxamine phosphate oxidase activity"/>
    <property type="evidence" value="ECO:0007669"/>
    <property type="project" value="UniProtKB-EC"/>
</dbReference>
<dbReference type="GO" id="GO:0008615">
    <property type="term" value="P:pyridoxine biosynthetic process"/>
    <property type="evidence" value="ECO:0007669"/>
    <property type="project" value="UniProtKB-KW"/>
</dbReference>
<dbReference type="FunFam" id="2.30.110.10:FF:000005">
    <property type="entry name" value="NAD(P)H-hydrate epimerase"/>
    <property type="match status" value="1"/>
</dbReference>
<dbReference type="Gene3D" id="2.30.110.10">
    <property type="entry name" value="Electron Transport, Fmn-binding Protein, Chain A"/>
    <property type="match status" value="1"/>
</dbReference>
<dbReference type="HAMAP" id="MF_01629">
    <property type="entry name" value="PdxH"/>
    <property type="match status" value="1"/>
</dbReference>
<dbReference type="InterPro" id="IPR000659">
    <property type="entry name" value="Pyridox_Oxase"/>
</dbReference>
<dbReference type="InterPro" id="IPR019740">
    <property type="entry name" value="Pyridox_Oxase_CS"/>
</dbReference>
<dbReference type="InterPro" id="IPR011576">
    <property type="entry name" value="Pyridox_Oxase_N"/>
</dbReference>
<dbReference type="InterPro" id="IPR019576">
    <property type="entry name" value="Pyridoxamine_oxidase_dimer_C"/>
</dbReference>
<dbReference type="InterPro" id="IPR012349">
    <property type="entry name" value="Split_barrel_FMN-bd"/>
</dbReference>
<dbReference type="NCBIfam" id="TIGR00558">
    <property type="entry name" value="pdxH"/>
    <property type="match status" value="1"/>
</dbReference>
<dbReference type="NCBIfam" id="NF004231">
    <property type="entry name" value="PRK05679.1"/>
    <property type="match status" value="1"/>
</dbReference>
<dbReference type="PANTHER" id="PTHR10851:SF0">
    <property type="entry name" value="PYRIDOXINE-5'-PHOSPHATE OXIDASE"/>
    <property type="match status" value="1"/>
</dbReference>
<dbReference type="PANTHER" id="PTHR10851">
    <property type="entry name" value="PYRIDOXINE-5-PHOSPHATE OXIDASE"/>
    <property type="match status" value="1"/>
</dbReference>
<dbReference type="Pfam" id="PF10590">
    <property type="entry name" value="PNP_phzG_C"/>
    <property type="match status" value="1"/>
</dbReference>
<dbReference type="Pfam" id="PF01243">
    <property type="entry name" value="PNPOx_N"/>
    <property type="match status" value="1"/>
</dbReference>
<dbReference type="PIRSF" id="PIRSF000190">
    <property type="entry name" value="Pyd_amn-ph_oxd"/>
    <property type="match status" value="1"/>
</dbReference>
<dbReference type="SUPFAM" id="SSF50475">
    <property type="entry name" value="FMN-binding split barrel"/>
    <property type="match status" value="1"/>
</dbReference>
<dbReference type="PROSITE" id="PS01064">
    <property type="entry name" value="PYRIDOX_OXIDASE"/>
    <property type="match status" value="1"/>
</dbReference>
<keyword id="KW-0285">Flavoprotein</keyword>
<keyword id="KW-0288">FMN</keyword>
<keyword id="KW-0560">Oxidoreductase</keyword>
<keyword id="KW-0664">Pyridoxine biosynthesis</keyword>
<keyword id="KW-1185">Reference proteome</keyword>
<accession>Q2S544</accession>